<comment type="function">
    <text evidence="1">Catalyzes the transfer of an acyl group from acyl-phosphate (acyl-PO(4)) to glycerol-3-phosphate (G3P) to form lysophosphatidic acid (LPA). This enzyme utilizes acyl-phosphate as fatty acyl donor, but not acyl-CoA or acyl-ACP.</text>
</comment>
<comment type="catalytic activity">
    <reaction evidence="1">
        <text>an acyl phosphate + sn-glycerol 3-phosphate = a 1-acyl-sn-glycero-3-phosphate + phosphate</text>
        <dbReference type="Rhea" id="RHEA:34075"/>
        <dbReference type="ChEBI" id="CHEBI:43474"/>
        <dbReference type="ChEBI" id="CHEBI:57597"/>
        <dbReference type="ChEBI" id="CHEBI:57970"/>
        <dbReference type="ChEBI" id="CHEBI:59918"/>
        <dbReference type="EC" id="2.3.1.275"/>
    </reaction>
</comment>
<comment type="pathway">
    <text evidence="1">Lipid metabolism; phospholipid metabolism.</text>
</comment>
<comment type="subunit">
    <text evidence="1">Probably interacts with PlsX.</text>
</comment>
<comment type="subcellular location">
    <subcellularLocation>
        <location evidence="1">Cell inner membrane</location>
        <topology evidence="1">Multi-pass membrane protein</topology>
    </subcellularLocation>
</comment>
<comment type="similarity">
    <text evidence="1">Belongs to the PlsY family.</text>
</comment>
<name>PLSY_PROM1</name>
<sequence length="198" mass="21530">MNLLILFFGYLFGSFPSGYLAGRIAKGIDIRSLGSGSTGATNVLRHIGKRAAIIVFLLDVFKGVLSILLAKYLLLNDSWQVAIGLSTLIGHIWPVWLNWKGGKAVATGLGIFLGLSWQVGLATLGVFIIMITLFRIVSLASVSASLALPLIMFLSFSGSNISLPFLIVSLLAMLLVIWRHRENIVRLIRGKEPRIGQP</sequence>
<evidence type="ECO:0000255" key="1">
    <source>
        <dbReference type="HAMAP-Rule" id="MF_01043"/>
    </source>
</evidence>
<organism>
    <name type="scientific">Prochlorococcus marinus (strain NATL1A)</name>
    <dbReference type="NCBI Taxonomy" id="167555"/>
    <lineage>
        <taxon>Bacteria</taxon>
        <taxon>Bacillati</taxon>
        <taxon>Cyanobacteriota</taxon>
        <taxon>Cyanophyceae</taxon>
        <taxon>Synechococcales</taxon>
        <taxon>Prochlorococcaceae</taxon>
        <taxon>Prochlorococcus</taxon>
    </lineage>
</organism>
<accession>A2C4A0</accession>
<keyword id="KW-0997">Cell inner membrane</keyword>
<keyword id="KW-1003">Cell membrane</keyword>
<keyword id="KW-0444">Lipid biosynthesis</keyword>
<keyword id="KW-0443">Lipid metabolism</keyword>
<keyword id="KW-0472">Membrane</keyword>
<keyword id="KW-0594">Phospholipid biosynthesis</keyword>
<keyword id="KW-1208">Phospholipid metabolism</keyword>
<keyword id="KW-0808">Transferase</keyword>
<keyword id="KW-0812">Transmembrane</keyword>
<keyword id="KW-1133">Transmembrane helix</keyword>
<proteinExistence type="inferred from homology"/>
<protein>
    <recommendedName>
        <fullName evidence="1">Glycerol-3-phosphate acyltransferase</fullName>
    </recommendedName>
    <alternativeName>
        <fullName evidence="1">Acyl-PO4 G3P acyltransferase</fullName>
    </alternativeName>
    <alternativeName>
        <fullName evidence="1">Acyl-phosphate--glycerol-3-phosphate acyltransferase</fullName>
    </alternativeName>
    <alternativeName>
        <fullName evidence="1">G3P acyltransferase</fullName>
        <shortName evidence="1">GPAT</shortName>
        <ecNumber evidence="1">2.3.1.275</ecNumber>
    </alternativeName>
    <alternativeName>
        <fullName evidence="1">Lysophosphatidic acid synthase</fullName>
        <shortName evidence="1">LPA synthase</shortName>
    </alternativeName>
</protein>
<dbReference type="EC" id="2.3.1.275" evidence="1"/>
<dbReference type="EMBL" id="CP000553">
    <property type="protein sequence ID" value="ABM76310.1"/>
    <property type="molecule type" value="Genomic_DNA"/>
</dbReference>
<dbReference type="RefSeq" id="WP_011824307.1">
    <property type="nucleotide sequence ID" value="NC_008819.1"/>
</dbReference>
<dbReference type="SMR" id="A2C4A0"/>
<dbReference type="KEGG" id="pme:NATL1_17541"/>
<dbReference type="eggNOG" id="COG0344">
    <property type="taxonomic scope" value="Bacteria"/>
</dbReference>
<dbReference type="HOGENOM" id="CLU_081254_7_1_3"/>
<dbReference type="UniPathway" id="UPA00085"/>
<dbReference type="Proteomes" id="UP000002592">
    <property type="component" value="Chromosome"/>
</dbReference>
<dbReference type="GO" id="GO:0005886">
    <property type="term" value="C:plasma membrane"/>
    <property type="evidence" value="ECO:0007669"/>
    <property type="project" value="UniProtKB-SubCell"/>
</dbReference>
<dbReference type="GO" id="GO:0043772">
    <property type="term" value="F:acyl-phosphate glycerol-3-phosphate acyltransferase activity"/>
    <property type="evidence" value="ECO:0007669"/>
    <property type="project" value="UniProtKB-UniRule"/>
</dbReference>
<dbReference type="GO" id="GO:0008654">
    <property type="term" value="P:phospholipid biosynthetic process"/>
    <property type="evidence" value="ECO:0007669"/>
    <property type="project" value="UniProtKB-UniRule"/>
</dbReference>
<dbReference type="HAMAP" id="MF_01043">
    <property type="entry name" value="PlsY"/>
    <property type="match status" value="1"/>
</dbReference>
<dbReference type="InterPro" id="IPR003811">
    <property type="entry name" value="G3P_acylTferase_PlsY"/>
</dbReference>
<dbReference type="NCBIfam" id="TIGR00023">
    <property type="entry name" value="glycerol-3-phosphate 1-O-acyltransferase PlsY"/>
    <property type="match status" value="1"/>
</dbReference>
<dbReference type="PANTHER" id="PTHR30309:SF0">
    <property type="entry name" value="GLYCEROL-3-PHOSPHATE ACYLTRANSFERASE-RELATED"/>
    <property type="match status" value="1"/>
</dbReference>
<dbReference type="PANTHER" id="PTHR30309">
    <property type="entry name" value="INNER MEMBRANE PROTEIN YGIH"/>
    <property type="match status" value="1"/>
</dbReference>
<dbReference type="Pfam" id="PF02660">
    <property type="entry name" value="G3P_acyltransf"/>
    <property type="match status" value="1"/>
</dbReference>
<dbReference type="SMART" id="SM01207">
    <property type="entry name" value="G3P_acyltransf"/>
    <property type="match status" value="1"/>
</dbReference>
<feature type="chain" id="PRO_1000064203" description="Glycerol-3-phosphate acyltransferase">
    <location>
        <begin position="1"/>
        <end position="198"/>
    </location>
</feature>
<feature type="transmembrane region" description="Helical" evidence="1">
    <location>
        <begin position="1"/>
        <end position="21"/>
    </location>
</feature>
<feature type="transmembrane region" description="Helical" evidence="1">
    <location>
        <begin position="53"/>
        <end position="73"/>
    </location>
</feature>
<feature type="transmembrane region" description="Helical" evidence="1">
    <location>
        <begin position="79"/>
        <end position="99"/>
    </location>
</feature>
<feature type="transmembrane region" description="Helical" evidence="1">
    <location>
        <begin position="111"/>
        <end position="131"/>
    </location>
</feature>
<feature type="transmembrane region" description="Helical" evidence="1">
    <location>
        <begin position="136"/>
        <end position="156"/>
    </location>
</feature>
<feature type="transmembrane region" description="Helical" evidence="1">
    <location>
        <begin position="158"/>
        <end position="178"/>
    </location>
</feature>
<gene>
    <name evidence="1" type="primary">plsY</name>
    <name type="ordered locus">NATL1_17541</name>
</gene>
<reference key="1">
    <citation type="journal article" date="2007" name="PLoS Genet.">
        <title>Patterns and implications of gene gain and loss in the evolution of Prochlorococcus.</title>
        <authorList>
            <person name="Kettler G.C."/>
            <person name="Martiny A.C."/>
            <person name="Huang K."/>
            <person name="Zucker J."/>
            <person name="Coleman M.L."/>
            <person name="Rodrigue S."/>
            <person name="Chen F."/>
            <person name="Lapidus A."/>
            <person name="Ferriera S."/>
            <person name="Johnson J."/>
            <person name="Steglich C."/>
            <person name="Church G.M."/>
            <person name="Richardson P."/>
            <person name="Chisholm S.W."/>
        </authorList>
    </citation>
    <scope>NUCLEOTIDE SEQUENCE [LARGE SCALE GENOMIC DNA]</scope>
    <source>
        <strain>NATL1A</strain>
    </source>
</reference>